<reference key="1">
    <citation type="journal article" date="1997" name="J. Bacteriol.">
        <title>Complete genome sequence of Methanobacterium thermoautotrophicum deltaH: functional analysis and comparative genomics.</title>
        <authorList>
            <person name="Smith D.R."/>
            <person name="Doucette-Stamm L.A."/>
            <person name="Deloughery C."/>
            <person name="Lee H.-M."/>
            <person name="Dubois J."/>
            <person name="Aldredge T."/>
            <person name="Bashirzadeh R."/>
            <person name="Blakely D."/>
            <person name="Cook R."/>
            <person name="Gilbert K."/>
            <person name="Harrison D."/>
            <person name="Hoang L."/>
            <person name="Keagle P."/>
            <person name="Lumm W."/>
            <person name="Pothier B."/>
            <person name="Qiu D."/>
            <person name="Spadafora R."/>
            <person name="Vicare R."/>
            <person name="Wang Y."/>
            <person name="Wierzbowski J."/>
            <person name="Gibson R."/>
            <person name="Jiwani N."/>
            <person name="Caruso A."/>
            <person name="Bush D."/>
            <person name="Safer H."/>
            <person name="Patwell D."/>
            <person name="Prabhakar S."/>
            <person name="McDougall S."/>
            <person name="Shimer G."/>
            <person name="Goyal A."/>
            <person name="Pietrovski S."/>
            <person name="Church G.M."/>
            <person name="Daniels C.J."/>
            <person name="Mao J.-I."/>
            <person name="Rice P."/>
            <person name="Noelling J."/>
            <person name="Reeve J.N."/>
        </authorList>
    </citation>
    <scope>NUCLEOTIDE SEQUENCE [LARGE SCALE GENOMIC DNA]</scope>
    <source>
        <strain>ATCC 29096 / DSM 1053 / JCM 10044 / NBRC 100330 / Delta H</strain>
    </source>
</reference>
<protein>
    <recommendedName>
        <fullName evidence="1">Cell division protein FtsZ</fullName>
    </recommendedName>
</protein>
<accession>O27712</accession>
<feature type="chain" id="PRO_0000114403" description="Cell division protein FtsZ">
    <location>
        <begin position="1"/>
        <end position="381"/>
    </location>
</feature>
<feature type="region of interest" description="Disordered" evidence="2">
    <location>
        <begin position="1"/>
        <end position="25"/>
    </location>
</feature>
<feature type="compositionally biased region" description="Basic and acidic residues" evidence="2">
    <location>
        <begin position="7"/>
        <end position="17"/>
    </location>
</feature>
<feature type="binding site" evidence="1">
    <location>
        <begin position="48"/>
        <end position="52"/>
    </location>
    <ligand>
        <name>GTP</name>
        <dbReference type="ChEBI" id="CHEBI:37565"/>
    </ligand>
</feature>
<feature type="binding site" evidence="1">
    <location>
        <begin position="135"/>
        <end position="137"/>
    </location>
    <ligand>
        <name>GTP</name>
        <dbReference type="ChEBI" id="CHEBI:37565"/>
    </ligand>
</feature>
<feature type="binding site" evidence="1">
    <location>
        <position position="166"/>
    </location>
    <ligand>
        <name>GTP</name>
        <dbReference type="ChEBI" id="CHEBI:37565"/>
    </ligand>
</feature>
<feature type="binding site" evidence="1">
    <location>
        <position position="170"/>
    </location>
    <ligand>
        <name>GTP</name>
        <dbReference type="ChEBI" id="CHEBI:37565"/>
    </ligand>
</feature>
<feature type="binding site" evidence="1">
    <location>
        <position position="213"/>
    </location>
    <ligand>
        <name>GTP</name>
        <dbReference type="ChEBI" id="CHEBI:37565"/>
    </ligand>
</feature>
<keyword id="KW-0131">Cell cycle</keyword>
<keyword id="KW-0132">Cell division</keyword>
<keyword id="KW-0963">Cytoplasm</keyword>
<keyword id="KW-0342">GTP-binding</keyword>
<keyword id="KW-0547">Nucleotide-binding</keyword>
<keyword id="KW-1185">Reference proteome</keyword>
<keyword id="KW-0717">Septation</keyword>
<organism>
    <name type="scientific">Methanothermobacter thermautotrophicus (strain ATCC 29096 / DSM 1053 / JCM 10044 / NBRC 100330 / Delta H)</name>
    <name type="common">Methanobacterium thermoautotrophicum</name>
    <dbReference type="NCBI Taxonomy" id="187420"/>
    <lineage>
        <taxon>Archaea</taxon>
        <taxon>Methanobacteriati</taxon>
        <taxon>Methanobacteriota</taxon>
        <taxon>Methanomada group</taxon>
        <taxon>Methanobacteria</taxon>
        <taxon>Methanobacteriales</taxon>
        <taxon>Methanobacteriaceae</taxon>
        <taxon>Methanothermobacter</taxon>
    </lineage>
</organism>
<evidence type="ECO:0000255" key="1">
    <source>
        <dbReference type="HAMAP-Rule" id="MF_00909"/>
    </source>
</evidence>
<evidence type="ECO:0000256" key="2">
    <source>
        <dbReference type="SAM" id="MobiDB-lite"/>
    </source>
</evidence>
<comment type="function">
    <text evidence="1">Essential cell division protein that forms a contractile ring structure (Z ring) at the future cell division site. The regulation of the ring assembly controls the timing and the location of cell division. One of the functions of the FtsZ ring is to recruit other cell division proteins to the septum to produce a new cell wall between the dividing cells. Binds GTP and shows GTPase activity.</text>
</comment>
<comment type="subunit">
    <text evidence="1">Homodimer. Polymerizes to form a dynamic ring structure in a strictly GTP-dependent manner. Interacts directly with several other division proteins.</text>
</comment>
<comment type="subcellular location">
    <subcellularLocation>
        <location evidence="1">Cytoplasm</location>
    </subcellularLocation>
    <text evidence="1">Assembles at midcell at the inner surface of the cytoplasmic membrane.</text>
</comment>
<comment type="similarity">
    <text evidence="1">Belongs to the FtsZ family.</text>
</comment>
<sequence>MKFINDAIKESEKREKPSSSSMNSEIDRELREIIENSRAKIYVVGTGGAGNNTVTRLSEIGVEGAETIAVNTDAQDLFYSVANRKLLIGKNVCGGLGAGGVPEVGEECAEESEDDIRRELEGADMVFVTCGLGGGTGTGSAPVISKLAKKAGALTIAVATMPFSAEGLKRRENAERGLEKLQSAADTVIVIPNDKLLEVAPNLPLNKAFMVADEILGRAVKGITELITKPGLVSLDFADVRSIMKGSGMAMIGMGEAESGDRALESVYEALNSPLLDLDISNARGALINISGSSDLTLQEAERIVEVVAEELDPDANIIWGAQIQDELQNVIRTTIVVAGVRSPYIYGAHGSAEKEFLEEKQREKDSVDESVLEEFIDGVF</sequence>
<name>FTSZ_METTH</name>
<gene>
    <name evidence="1" type="primary">ftsZ</name>
    <name type="ordered locus">MTH_1676</name>
</gene>
<proteinExistence type="inferred from homology"/>
<dbReference type="EMBL" id="AE000666">
    <property type="protein sequence ID" value="AAB86148.1"/>
    <property type="molecule type" value="Genomic_DNA"/>
</dbReference>
<dbReference type="PIR" id="A69091">
    <property type="entry name" value="A69091"/>
</dbReference>
<dbReference type="RefSeq" id="WP_010877283.1">
    <property type="nucleotide sequence ID" value="NC_000916.1"/>
</dbReference>
<dbReference type="SMR" id="O27712"/>
<dbReference type="FunCoup" id="O27712">
    <property type="interactions" value="71"/>
</dbReference>
<dbReference type="STRING" id="187420.MTH_1676"/>
<dbReference type="PaxDb" id="187420-MTH_1676"/>
<dbReference type="EnsemblBacteria" id="AAB86148">
    <property type="protein sequence ID" value="AAB86148"/>
    <property type="gene ID" value="MTH_1676"/>
</dbReference>
<dbReference type="GeneID" id="77404068"/>
<dbReference type="KEGG" id="mth:MTH_1676"/>
<dbReference type="PATRIC" id="fig|187420.15.peg.1636"/>
<dbReference type="HOGENOM" id="CLU_024865_0_1_2"/>
<dbReference type="InParanoid" id="O27712"/>
<dbReference type="Proteomes" id="UP000005223">
    <property type="component" value="Chromosome"/>
</dbReference>
<dbReference type="GO" id="GO:0032153">
    <property type="term" value="C:cell division site"/>
    <property type="evidence" value="ECO:0007669"/>
    <property type="project" value="UniProtKB-UniRule"/>
</dbReference>
<dbReference type="GO" id="GO:0005737">
    <property type="term" value="C:cytoplasm"/>
    <property type="evidence" value="ECO:0007669"/>
    <property type="project" value="UniProtKB-SubCell"/>
</dbReference>
<dbReference type="GO" id="GO:0005525">
    <property type="term" value="F:GTP binding"/>
    <property type="evidence" value="ECO:0007669"/>
    <property type="project" value="UniProtKB-UniRule"/>
</dbReference>
<dbReference type="GO" id="GO:0003924">
    <property type="term" value="F:GTPase activity"/>
    <property type="evidence" value="ECO:0007669"/>
    <property type="project" value="UniProtKB-UniRule"/>
</dbReference>
<dbReference type="GO" id="GO:0043093">
    <property type="term" value="P:FtsZ-dependent cytokinesis"/>
    <property type="evidence" value="ECO:0007669"/>
    <property type="project" value="UniProtKB-UniRule"/>
</dbReference>
<dbReference type="GO" id="GO:0051258">
    <property type="term" value="P:protein polymerization"/>
    <property type="evidence" value="ECO:0007669"/>
    <property type="project" value="UniProtKB-UniRule"/>
</dbReference>
<dbReference type="CDD" id="cd02201">
    <property type="entry name" value="FtsZ_type1"/>
    <property type="match status" value="1"/>
</dbReference>
<dbReference type="FunFam" id="3.40.50.1440:FF:000023">
    <property type="entry name" value="Cell division protein FtsZ"/>
    <property type="match status" value="1"/>
</dbReference>
<dbReference type="Gene3D" id="3.30.1330.20">
    <property type="entry name" value="Tubulin/FtsZ, C-terminal domain"/>
    <property type="match status" value="1"/>
</dbReference>
<dbReference type="Gene3D" id="3.40.50.1440">
    <property type="entry name" value="Tubulin/FtsZ, GTPase domain"/>
    <property type="match status" value="1"/>
</dbReference>
<dbReference type="HAMAP" id="MF_00909">
    <property type="entry name" value="FtsZ"/>
    <property type="match status" value="1"/>
</dbReference>
<dbReference type="InterPro" id="IPR000158">
    <property type="entry name" value="Cell_div_FtsZ"/>
</dbReference>
<dbReference type="InterPro" id="IPR020805">
    <property type="entry name" value="Cell_div_FtsZ_CS"/>
</dbReference>
<dbReference type="InterPro" id="IPR045061">
    <property type="entry name" value="FtsZ/CetZ"/>
</dbReference>
<dbReference type="InterPro" id="IPR024757">
    <property type="entry name" value="FtsZ_C"/>
</dbReference>
<dbReference type="InterPro" id="IPR008280">
    <property type="entry name" value="Tub_FtsZ_C"/>
</dbReference>
<dbReference type="InterPro" id="IPR037103">
    <property type="entry name" value="Tubulin/FtsZ-like_C"/>
</dbReference>
<dbReference type="InterPro" id="IPR018316">
    <property type="entry name" value="Tubulin/FtsZ_2-layer-sand-dom"/>
</dbReference>
<dbReference type="InterPro" id="IPR036525">
    <property type="entry name" value="Tubulin/FtsZ_GTPase_sf"/>
</dbReference>
<dbReference type="InterPro" id="IPR003008">
    <property type="entry name" value="Tubulin_FtsZ_GTPase"/>
</dbReference>
<dbReference type="NCBIfam" id="TIGR00065">
    <property type="entry name" value="ftsZ"/>
    <property type="match status" value="1"/>
</dbReference>
<dbReference type="PANTHER" id="PTHR30314">
    <property type="entry name" value="CELL DIVISION PROTEIN FTSZ-RELATED"/>
    <property type="match status" value="1"/>
</dbReference>
<dbReference type="PANTHER" id="PTHR30314:SF3">
    <property type="entry name" value="MITOCHONDRIAL DIVISION PROTEIN FSZA"/>
    <property type="match status" value="1"/>
</dbReference>
<dbReference type="Pfam" id="PF12327">
    <property type="entry name" value="FtsZ_C"/>
    <property type="match status" value="1"/>
</dbReference>
<dbReference type="Pfam" id="PF00091">
    <property type="entry name" value="Tubulin"/>
    <property type="match status" value="1"/>
</dbReference>
<dbReference type="PRINTS" id="PR00423">
    <property type="entry name" value="CELLDVISFTSZ"/>
</dbReference>
<dbReference type="SMART" id="SM00864">
    <property type="entry name" value="Tubulin"/>
    <property type="match status" value="1"/>
</dbReference>
<dbReference type="SMART" id="SM00865">
    <property type="entry name" value="Tubulin_C"/>
    <property type="match status" value="1"/>
</dbReference>
<dbReference type="SUPFAM" id="SSF55307">
    <property type="entry name" value="Tubulin C-terminal domain-like"/>
    <property type="match status" value="1"/>
</dbReference>
<dbReference type="SUPFAM" id="SSF52490">
    <property type="entry name" value="Tubulin nucleotide-binding domain-like"/>
    <property type="match status" value="1"/>
</dbReference>
<dbReference type="PROSITE" id="PS01134">
    <property type="entry name" value="FTSZ_1"/>
    <property type="match status" value="1"/>
</dbReference>
<dbReference type="PROSITE" id="PS01135">
    <property type="entry name" value="FTSZ_2"/>
    <property type="match status" value="1"/>
</dbReference>